<keyword id="KW-0067">ATP-binding</keyword>
<keyword id="KW-0460">Magnesium</keyword>
<keyword id="KW-0547">Nucleotide-binding</keyword>
<keyword id="KW-1185">Reference proteome</keyword>
<keyword id="KW-0808">Transferase</keyword>
<keyword id="KW-0819">tRNA processing</keyword>
<feature type="chain" id="PRO_0000163867" description="tRNA dimethylallyltransferase">
    <location>
        <begin position="1"/>
        <end position="305"/>
    </location>
</feature>
<feature type="region of interest" description="Interaction with substrate tRNA" evidence="1">
    <location>
        <begin position="33"/>
        <end position="36"/>
    </location>
</feature>
<feature type="binding site" evidence="1">
    <location>
        <begin position="8"/>
        <end position="15"/>
    </location>
    <ligand>
        <name>ATP</name>
        <dbReference type="ChEBI" id="CHEBI:30616"/>
    </ligand>
</feature>
<feature type="binding site" evidence="1">
    <location>
        <begin position="10"/>
        <end position="15"/>
    </location>
    <ligand>
        <name>substrate</name>
    </ligand>
</feature>
<feature type="site" description="Interaction with substrate tRNA" evidence="1">
    <location>
        <position position="98"/>
    </location>
</feature>
<feature type="site" description="Interaction with substrate tRNA" evidence="1">
    <location>
        <position position="120"/>
    </location>
</feature>
<sequence length="305" mass="35224">MKILVIGGPTAIGKSDLACCVAQKLNGEIISADSMAVYKFMDIGTAKPLECMKKVPHHLIDVVEPGGYFDAKIFEEMAKEKIEEIKRKGKVPIVVGGTYLYIQALLYGIDETPKPDWNLRNKLYEIARKKGNDYLYEKLKAIDPKYAKKIHKNDLRRIVRALEVFINTGKPFSSFHSWNKPKMDFVGIYLKRSPESLYKRIENRVYDMVKDGLLEEVKKLLEMGYENFLTSGQAIDYKEFVPCAKGEKSLEECIKEAIKNTKKQAKRQIRWFRKQGWHEIDLDKLSIEEACEEVVRIYKDANKTK</sequence>
<evidence type="ECO:0000255" key="1">
    <source>
        <dbReference type="HAMAP-Rule" id="MF_00185"/>
    </source>
</evidence>
<comment type="function">
    <text evidence="1">Catalyzes the transfer of a dimethylallyl group onto the adenine at position 37 in tRNAs that read codons beginning with uridine, leading to the formation of N6-(dimethylallyl)adenosine (i(6)A).</text>
</comment>
<comment type="catalytic activity">
    <reaction evidence="1">
        <text>adenosine(37) in tRNA + dimethylallyl diphosphate = N(6)-dimethylallyladenosine(37) in tRNA + diphosphate</text>
        <dbReference type="Rhea" id="RHEA:26482"/>
        <dbReference type="Rhea" id="RHEA-COMP:10162"/>
        <dbReference type="Rhea" id="RHEA-COMP:10375"/>
        <dbReference type="ChEBI" id="CHEBI:33019"/>
        <dbReference type="ChEBI" id="CHEBI:57623"/>
        <dbReference type="ChEBI" id="CHEBI:74411"/>
        <dbReference type="ChEBI" id="CHEBI:74415"/>
        <dbReference type="EC" id="2.5.1.75"/>
    </reaction>
</comment>
<comment type="cofactor">
    <cofactor evidence="1">
        <name>Mg(2+)</name>
        <dbReference type="ChEBI" id="CHEBI:18420"/>
    </cofactor>
</comment>
<comment type="subunit">
    <text evidence="1">Monomer.</text>
</comment>
<comment type="similarity">
    <text evidence="1">Belongs to the IPP transferase family.</text>
</comment>
<dbReference type="EC" id="2.5.1.75" evidence="1"/>
<dbReference type="EMBL" id="AE000657">
    <property type="protein sequence ID" value="AAC07124.1"/>
    <property type="molecule type" value="Genomic_DNA"/>
</dbReference>
<dbReference type="PIR" id="G70391">
    <property type="entry name" value="G70391"/>
</dbReference>
<dbReference type="RefSeq" id="NP_213725.1">
    <property type="nucleotide sequence ID" value="NC_000918.1"/>
</dbReference>
<dbReference type="RefSeq" id="WP_010880663.1">
    <property type="nucleotide sequence ID" value="NC_000918.1"/>
</dbReference>
<dbReference type="SMR" id="O67162"/>
<dbReference type="FunCoup" id="O67162">
    <property type="interactions" value="396"/>
</dbReference>
<dbReference type="STRING" id="224324.aq_1067"/>
<dbReference type="EnsemblBacteria" id="AAC07124">
    <property type="protein sequence ID" value="AAC07124"/>
    <property type="gene ID" value="aq_1067"/>
</dbReference>
<dbReference type="KEGG" id="aae:aq_1067"/>
<dbReference type="PATRIC" id="fig|224324.8.peg.826"/>
<dbReference type="eggNOG" id="COG0324">
    <property type="taxonomic scope" value="Bacteria"/>
</dbReference>
<dbReference type="HOGENOM" id="CLU_032616_0_1_0"/>
<dbReference type="InParanoid" id="O67162"/>
<dbReference type="OrthoDB" id="9776390at2"/>
<dbReference type="Proteomes" id="UP000000798">
    <property type="component" value="Chromosome"/>
</dbReference>
<dbReference type="GO" id="GO:0005524">
    <property type="term" value="F:ATP binding"/>
    <property type="evidence" value="ECO:0007669"/>
    <property type="project" value="UniProtKB-UniRule"/>
</dbReference>
<dbReference type="GO" id="GO:0052381">
    <property type="term" value="F:tRNA dimethylallyltransferase activity"/>
    <property type="evidence" value="ECO:0000318"/>
    <property type="project" value="GO_Central"/>
</dbReference>
<dbReference type="GO" id="GO:0006400">
    <property type="term" value="P:tRNA modification"/>
    <property type="evidence" value="ECO:0000318"/>
    <property type="project" value="GO_Central"/>
</dbReference>
<dbReference type="FunFam" id="1.10.20.140:FF:000001">
    <property type="entry name" value="tRNA dimethylallyltransferase"/>
    <property type="match status" value="1"/>
</dbReference>
<dbReference type="Gene3D" id="1.10.20.140">
    <property type="match status" value="1"/>
</dbReference>
<dbReference type="Gene3D" id="3.40.50.300">
    <property type="entry name" value="P-loop containing nucleotide triphosphate hydrolases"/>
    <property type="match status" value="1"/>
</dbReference>
<dbReference type="HAMAP" id="MF_00185">
    <property type="entry name" value="IPP_trans"/>
    <property type="match status" value="1"/>
</dbReference>
<dbReference type="InterPro" id="IPR039657">
    <property type="entry name" value="Dimethylallyltransferase"/>
</dbReference>
<dbReference type="InterPro" id="IPR018022">
    <property type="entry name" value="IPT"/>
</dbReference>
<dbReference type="InterPro" id="IPR027417">
    <property type="entry name" value="P-loop_NTPase"/>
</dbReference>
<dbReference type="NCBIfam" id="TIGR00174">
    <property type="entry name" value="miaA"/>
    <property type="match status" value="1"/>
</dbReference>
<dbReference type="PANTHER" id="PTHR11088">
    <property type="entry name" value="TRNA DIMETHYLALLYLTRANSFERASE"/>
    <property type="match status" value="1"/>
</dbReference>
<dbReference type="PANTHER" id="PTHR11088:SF60">
    <property type="entry name" value="TRNA DIMETHYLALLYLTRANSFERASE"/>
    <property type="match status" value="1"/>
</dbReference>
<dbReference type="Pfam" id="PF01715">
    <property type="entry name" value="IPPT"/>
    <property type="match status" value="1"/>
</dbReference>
<dbReference type="SUPFAM" id="SSF52540">
    <property type="entry name" value="P-loop containing nucleoside triphosphate hydrolases"/>
    <property type="match status" value="2"/>
</dbReference>
<organism>
    <name type="scientific">Aquifex aeolicus (strain VF5)</name>
    <dbReference type="NCBI Taxonomy" id="224324"/>
    <lineage>
        <taxon>Bacteria</taxon>
        <taxon>Pseudomonadati</taxon>
        <taxon>Aquificota</taxon>
        <taxon>Aquificia</taxon>
        <taxon>Aquificales</taxon>
        <taxon>Aquificaceae</taxon>
        <taxon>Aquifex</taxon>
    </lineage>
</organism>
<accession>O67162</accession>
<reference key="1">
    <citation type="journal article" date="1998" name="Nature">
        <title>The complete genome of the hyperthermophilic bacterium Aquifex aeolicus.</title>
        <authorList>
            <person name="Deckert G."/>
            <person name="Warren P.V."/>
            <person name="Gaasterland T."/>
            <person name="Young W.G."/>
            <person name="Lenox A.L."/>
            <person name="Graham D.E."/>
            <person name="Overbeek R."/>
            <person name="Snead M.A."/>
            <person name="Keller M."/>
            <person name="Aujay M."/>
            <person name="Huber R."/>
            <person name="Feldman R.A."/>
            <person name="Short J.M."/>
            <person name="Olsen G.J."/>
            <person name="Swanson R.V."/>
        </authorList>
    </citation>
    <scope>NUCLEOTIDE SEQUENCE [LARGE SCALE GENOMIC DNA]</scope>
    <source>
        <strain>VF5</strain>
    </source>
</reference>
<name>MIAA_AQUAE</name>
<gene>
    <name evidence="1" type="primary">miaA</name>
    <name type="ordered locus">aq_1067</name>
</gene>
<proteinExistence type="inferred from homology"/>
<protein>
    <recommendedName>
        <fullName evidence="1">tRNA dimethylallyltransferase</fullName>
        <ecNumber evidence="1">2.5.1.75</ecNumber>
    </recommendedName>
    <alternativeName>
        <fullName evidence="1">Dimethylallyl diphosphate:tRNA dimethylallyltransferase</fullName>
        <shortName evidence="1">DMAPP:tRNA dimethylallyltransferase</shortName>
        <shortName evidence="1">DMATase</shortName>
    </alternativeName>
    <alternativeName>
        <fullName evidence="1">Isopentenyl-diphosphate:tRNA isopentenyltransferase</fullName>
        <shortName evidence="1">IPP transferase</shortName>
        <shortName evidence="1">IPPT</shortName>
        <shortName evidence="1">IPTase</shortName>
    </alternativeName>
</protein>